<comment type="subcellular location">
    <subcellularLocation>
        <location evidence="2">Plastid</location>
        <location evidence="2">Chloroplast membrane</location>
        <topology evidence="2">Multi-pass membrane protein</topology>
    </subcellularLocation>
</comment>
<comment type="similarity">
    <text evidence="2">Belongs to the ycf78 family.</text>
</comment>
<gene>
    <name type="primary">ycf78</name>
    <name type="synonym">ycf1</name>
</gene>
<proteinExistence type="inferred from homology"/>
<dbReference type="EMBL" id="DQ851108">
    <property type="protein sequence ID" value="ABG91413.1"/>
    <property type="molecule type" value="Genomic_DNA"/>
</dbReference>
<dbReference type="RefSeq" id="YP_778581.1">
    <property type="nucleotide sequence ID" value="NC_008408.1"/>
</dbReference>
<dbReference type="SMR" id="Q06J46"/>
<dbReference type="GeneID" id="4352998"/>
<dbReference type="GO" id="GO:0031969">
    <property type="term" value="C:chloroplast membrane"/>
    <property type="evidence" value="ECO:0007669"/>
    <property type="project" value="UniProtKB-SubCell"/>
</dbReference>
<keyword id="KW-0150">Chloroplast</keyword>
<keyword id="KW-0472">Membrane</keyword>
<keyword id="KW-0934">Plastid</keyword>
<keyword id="KW-0812">Transmembrane</keyword>
<keyword id="KW-1133">Transmembrane helix</keyword>
<accession>Q06J46</accession>
<reference key="1">
    <citation type="journal article" date="2007" name="Mol. Biol. Evol.">
        <title>The complete chloroplast genome of the chlorarachniophyte Bigelowiella natans: evidence for independent origins of chlorarachniophyte and euglenid secondary endosymbionts.</title>
        <authorList>
            <person name="Rogers M.B."/>
            <person name="Gilson P.R."/>
            <person name="Su V."/>
            <person name="McFadden G.I."/>
            <person name="Keeling P.J."/>
        </authorList>
    </citation>
    <scope>NUCLEOTIDE SEQUENCE [LARGE SCALE GENOMIC DNA]</scope>
</reference>
<protein>
    <recommendedName>
        <fullName>Uncharacterized membrane protein ycf78</fullName>
    </recommendedName>
    <alternativeName>
        <fullName>ycf1</fullName>
    </alternativeName>
</protein>
<sequence length="885" mass="105388">MSYTQLLKDFTEISYWNIDNLFNYFDLDIITKNTVNEILPLLTGSFFLDFIVNKFILPPITFLNQLIYFYYPIFESFKIFILKLFQNDLLKIFSNFPLFYTNIKENILNEDIFFKSQYSNSITLLQLPVYLDNKFFIGFLNSIFLSLPFSCNQLICFYRFFTSGPSYGIIATLGWLIGQCSLFFCLLFGFRPVIIQWFSLEPLNYFLAIFIIVNFLRKTINSTTFTQKNKNRKNKVDLEKLNKQKEIESIFGMHFLLSWTESVSLFSNFSSFNFGRESNILSISSSPSISQYYLTQGSYIFGIFIGCIFFSYIYNVIIIRLLFRFHKVFITSNNNKTNSEFKNFMNLVGFNTLVLIIGVTIASISNFDVGYLLTSSLGFTPQDKALSRILLNTNSSDPQIRISLAPGRRDGFIGNDNDFMYIDIFSFNDKEYKNTLEFEEVNYQVEYEWMSRYDKFNERERRPKPQKSIDTKKEFNNHSMKEYRSLDVFPTDRYKNRETKKIFNDNNSFINENYLNKNTKFNFYKEIMDSNFKLDFIPYKKAFFAANTTEADLFEVQQEIKQKYYINTIYKVLLNFEVDSMISRQLTNSILLEPQEADLFNRRVALSNYYESNYYYSKMNHFDLFRNNFFNSKSYINNVYNQQFNGTLRIVSKLFPISLNENPNQRSILKFDYPLIEEYRKNKYTHEEIIPDKFNQFSYDNYKGLLSTTSSPLYITWNHNLNQLVITNNLILKNFNTKSQLDSYPFYSIDENKLIQGPMTLTNLQTLNNLVRNSYSLFSNPALRKLFYVNENIFYQNDNIFLLDALDLENYEQYLFFKLNVSPKPIEASLKNSNSVNWYAFRYNDEIRDQKRDEEANKYIKYIVQEINKDDERNYKFKYDLKSMN</sequence>
<organism>
    <name type="scientific">Bigelowiella natans</name>
    <name type="common">Pedinomonas minutissima</name>
    <name type="synonym">Chlorarachnion sp. (strain CCMP621)</name>
    <dbReference type="NCBI Taxonomy" id="227086"/>
    <lineage>
        <taxon>Eukaryota</taxon>
        <taxon>Sar</taxon>
        <taxon>Rhizaria</taxon>
        <taxon>Cercozoa</taxon>
        <taxon>Chlorarachniophyceae</taxon>
        <taxon>Bigelowiella</taxon>
    </lineage>
</organism>
<name>YCF78_BIGNA</name>
<evidence type="ECO:0000255" key="1"/>
<evidence type="ECO:0000305" key="2"/>
<feature type="chain" id="PRO_0000293979" description="Uncharacterized membrane protein ycf78">
    <location>
        <begin position="1"/>
        <end position="885"/>
    </location>
</feature>
<feature type="transmembrane region" description="Helical" evidence="1">
    <location>
        <begin position="62"/>
        <end position="82"/>
    </location>
</feature>
<feature type="transmembrane region" description="Helical" evidence="1">
    <location>
        <begin position="135"/>
        <end position="155"/>
    </location>
</feature>
<feature type="transmembrane region" description="Helical" evidence="1">
    <location>
        <begin position="168"/>
        <end position="188"/>
    </location>
</feature>
<feature type="transmembrane region" description="Helical" evidence="1">
    <location>
        <begin position="193"/>
        <end position="213"/>
    </location>
</feature>
<feature type="transmembrane region" description="Helical" evidence="1">
    <location>
        <begin position="299"/>
        <end position="319"/>
    </location>
</feature>
<feature type="transmembrane region" description="Helical" evidence="1">
    <location>
        <begin position="344"/>
        <end position="364"/>
    </location>
</feature>
<geneLocation type="chloroplast"/>